<dbReference type="EC" id="3.1.1.85" evidence="2"/>
<dbReference type="EMBL" id="CP000964">
    <property type="protein sequence ID" value="ACI11379.1"/>
    <property type="molecule type" value="Genomic_DNA"/>
</dbReference>
<dbReference type="SMR" id="B5XTS4"/>
<dbReference type="ESTHER" id="klep3-bioh">
    <property type="family name" value="BioH"/>
</dbReference>
<dbReference type="KEGG" id="kpe:KPK_0333"/>
<dbReference type="HOGENOM" id="CLU_020336_12_2_6"/>
<dbReference type="UniPathway" id="UPA00078"/>
<dbReference type="Proteomes" id="UP000001734">
    <property type="component" value="Chromosome"/>
</dbReference>
<dbReference type="GO" id="GO:0005737">
    <property type="term" value="C:cytoplasm"/>
    <property type="evidence" value="ECO:0007669"/>
    <property type="project" value="UniProtKB-SubCell"/>
</dbReference>
<dbReference type="GO" id="GO:0090499">
    <property type="term" value="F:pimelyl-[acyl-carrier protein] methyl ester esterase activity"/>
    <property type="evidence" value="ECO:0007669"/>
    <property type="project" value="UniProtKB-EC"/>
</dbReference>
<dbReference type="GO" id="GO:0009102">
    <property type="term" value="P:biotin biosynthetic process"/>
    <property type="evidence" value="ECO:0007669"/>
    <property type="project" value="UniProtKB-UniRule"/>
</dbReference>
<dbReference type="FunFam" id="3.40.50.1820:FF:000045">
    <property type="entry name" value="Pimeloyl-[acyl-carrier protein] methyl ester esterase"/>
    <property type="match status" value="1"/>
</dbReference>
<dbReference type="Gene3D" id="3.40.50.1820">
    <property type="entry name" value="alpha/beta hydrolase"/>
    <property type="match status" value="1"/>
</dbReference>
<dbReference type="HAMAP" id="MF_01260">
    <property type="entry name" value="Carboxylester"/>
    <property type="match status" value="1"/>
</dbReference>
<dbReference type="InterPro" id="IPR000073">
    <property type="entry name" value="AB_hydrolase_1"/>
</dbReference>
<dbReference type="InterPro" id="IPR029058">
    <property type="entry name" value="AB_hydrolase_fold"/>
</dbReference>
<dbReference type="InterPro" id="IPR010076">
    <property type="entry name" value="BioH"/>
</dbReference>
<dbReference type="InterPro" id="IPR050228">
    <property type="entry name" value="Carboxylesterase_BioH"/>
</dbReference>
<dbReference type="NCBIfam" id="TIGR01738">
    <property type="entry name" value="bioH"/>
    <property type="match status" value="1"/>
</dbReference>
<dbReference type="NCBIfam" id="NF007674">
    <property type="entry name" value="PRK10349.1"/>
    <property type="match status" value="1"/>
</dbReference>
<dbReference type="PANTHER" id="PTHR43194">
    <property type="entry name" value="HYDROLASE ALPHA/BETA FOLD FAMILY"/>
    <property type="match status" value="1"/>
</dbReference>
<dbReference type="PANTHER" id="PTHR43194:SF5">
    <property type="entry name" value="PIMELOYL-[ACYL-CARRIER PROTEIN] METHYL ESTER ESTERASE"/>
    <property type="match status" value="1"/>
</dbReference>
<dbReference type="Pfam" id="PF00561">
    <property type="entry name" value="Abhydrolase_1"/>
    <property type="match status" value="1"/>
</dbReference>
<dbReference type="SUPFAM" id="SSF53474">
    <property type="entry name" value="alpha/beta-Hydrolases"/>
    <property type="match status" value="1"/>
</dbReference>
<keyword id="KW-0093">Biotin biosynthesis</keyword>
<keyword id="KW-0963">Cytoplasm</keyword>
<keyword id="KW-0378">Hydrolase</keyword>
<keyword id="KW-0719">Serine esterase</keyword>
<name>BIOH_KLEP3</name>
<gene>
    <name evidence="2" type="primary">bioH</name>
    <name type="ordered locus">KPK_0333</name>
</gene>
<feature type="chain" id="PRO_1000139995" description="Pimeloyl-[acyl-carrier protein] methyl ester esterase">
    <location>
        <begin position="1"/>
        <end position="257"/>
    </location>
</feature>
<feature type="domain" description="AB hydrolase-1" evidence="1">
    <location>
        <begin position="15"/>
        <end position="241"/>
    </location>
</feature>
<feature type="active site" description="Nucleophile" evidence="2">
    <location>
        <position position="82"/>
    </location>
</feature>
<feature type="active site" evidence="2">
    <location>
        <position position="207"/>
    </location>
</feature>
<feature type="active site" evidence="2">
    <location>
        <position position="235"/>
    </location>
</feature>
<feature type="binding site" evidence="2">
    <location>
        <position position="22"/>
    </location>
    <ligand>
        <name>substrate</name>
    </ligand>
</feature>
<feature type="binding site" evidence="2">
    <location>
        <begin position="82"/>
        <end position="83"/>
    </location>
    <ligand>
        <name>substrate</name>
    </ligand>
</feature>
<feature type="binding site" evidence="2">
    <location>
        <begin position="143"/>
        <end position="147"/>
    </location>
    <ligand>
        <name>substrate</name>
    </ligand>
</feature>
<feature type="binding site" evidence="2">
    <location>
        <position position="235"/>
    </location>
    <ligand>
        <name>substrate</name>
    </ligand>
</feature>
<reference key="1">
    <citation type="journal article" date="2008" name="PLoS Genet.">
        <title>Complete genome sequence of the N2-fixing broad host range endophyte Klebsiella pneumoniae 342 and virulence predictions verified in mice.</title>
        <authorList>
            <person name="Fouts D.E."/>
            <person name="Tyler H.L."/>
            <person name="DeBoy R.T."/>
            <person name="Daugherty S."/>
            <person name="Ren Q."/>
            <person name="Badger J.H."/>
            <person name="Durkin A.S."/>
            <person name="Huot H."/>
            <person name="Shrivastava S."/>
            <person name="Kothari S."/>
            <person name="Dodson R.J."/>
            <person name="Mohamoud Y."/>
            <person name="Khouri H."/>
            <person name="Roesch L.F.W."/>
            <person name="Krogfelt K.A."/>
            <person name="Struve C."/>
            <person name="Triplett E.W."/>
            <person name="Methe B.A."/>
        </authorList>
    </citation>
    <scope>NUCLEOTIDE SEQUENCE [LARGE SCALE GENOMIC DNA]</scope>
    <source>
        <strain>342</strain>
    </source>
</reference>
<evidence type="ECO:0000255" key="1"/>
<evidence type="ECO:0000255" key="2">
    <source>
        <dbReference type="HAMAP-Rule" id="MF_01260"/>
    </source>
</evidence>
<organism>
    <name type="scientific">Klebsiella pneumoniae (strain 342)</name>
    <dbReference type="NCBI Taxonomy" id="507522"/>
    <lineage>
        <taxon>Bacteria</taxon>
        <taxon>Pseudomonadati</taxon>
        <taxon>Pseudomonadota</taxon>
        <taxon>Gammaproteobacteria</taxon>
        <taxon>Enterobacterales</taxon>
        <taxon>Enterobacteriaceae</taxon>
        <taxon>Klebsiella/Raoultella group</taxon>
        <taxon>Klebsiella</taxon>
        <taxon>Klebsiella pneumoniae complex</taxon>
    </lineage>
</organism>
<proteinExistence type="inferred from homology"/>
<accession>B5XTS4</accession>
<sequence>MNDIWWQTIGEGDCHLVLLHGWGLNAQVWDCITPQLASHFTLHLVDLPGYGRSGGYGAMSLEAMAQRVLEQAPPQAVWLGWSLGGLVASQVAMMHPERVQALVTVASSPCFAACDDWPGIKPEVLAGFQQQLSDDFQRTVERFLALQTMGTESARQDARALKQAVLSLPMPSAEALNGGLEILRTVDLRQALVGLPIPFLRLYGRLDGLVPRKIVPLLDELWPESESILFDKAAHAPFVSHPAAFCEPLLALKTQLG</sequence>
<protein>
    <recommendedName>
        <fullName evidence="2">Pimeloyl-[acyl-carrier protein] methyl ester esterase</fullName>
        <ecNumber evidence="2">3.1.1.85</ecNumber>
    </recommendedName>
    <alternativeName>
        <fullName evidence="2">Biotin synthesis protein BioH</fullName>
    </alternativeName>
    <alternativeName>
        <fullName evidence="2">Carboxylesterase BioH</fullName>
    </alternativeName>
</protein>
<comment type="function">
    <text evidence="2">The physiological role of BioH is to remove the methyl group introduced by BioC when the pimeloyl moiety is complete. It allows to synthesize pimeloyl-ACP via the fatty acid synthetic pathway through the hydrolysis of the ester bonds of pimeloyl-ACP esters.</text>
</comment>
<comment type="catalytic activity">
    <reaction evidence="2">
        <text>6-carboxyhexanoyl-[ACP] methyl ester + H2O = 6-carboxyhexanoyl-[ACP] + methanol + H(+)</text>
        <dbReference type="Rhea" id="RHEA:42700"/>
        <dbReference type="Rhea" id="RHEA-COMP:9955"/>
        <dbReference type="Rhea" id="RHEA-COMP:10186"/>
        <dbReference type="ChEBI" id="CHEBI:15377"/>
        <dbReference type="ChEBI" id="CHEBI:15378"/>
        <dbReference type="ChEBI" id="CHEBI:17790"/>
        <dbReference type="ChEBI" id="CHEBI:78846"/>
        <dbReference type="ChEBI" id="CHEBI:82735"/>
        <dbReference type="EC" id="3.1.1.85"/>
    </reaction>
</comment>
<comment type="pathway">
    <text evidence="2">Cofactor biosynthesis; biotin biosynthesis.</text>
</comment>
<comment type="subunit">
    <text evidence="2">Monomer.</text>
</comment>
<comment type="subcellular location">
    <subcellularLocation>
        <location evidence="2">Cytoplasm</location>
    </subcellularLocation>
</comment>
<comment type="similarity">
    <text evidence="2">Belongs to the AB hydrolase superfamily. Carboxylesterase BioH family.</text>
</comment>